<protein>
    <recommendedName>
        <fullName>Vomeronasal type-1 receptor 105</fullName>
    </recommendedName>
    <alternativeName>
        <fullName>Pheromone receptor VN1</fullName>
    </alternativeName>
    <alternativeName>
        <fullName>Vomeronasal type-1 receptor 51</fullName>
    </alternativeName>
    <alternativeName>
        <fullName>Vomeronasal type-1 receptor A1</fullName>
        <shortName>Vomeronasal receptor 1</shortName>
    </alternativeName>
</protein>
<sequence length="311" mass="35377">MMNKNSRLYTDSNIRNTFFAEIGIGVSANSLLLLFNIFKLICGQRSRLTDLPIGLLSLINLLMLLMTAFIATDTFISWRGWDDIICKSLLYLYRTFRGLSLCTSCLLSVLQAIILSPRSSCLAKFKHKPSHHISCAILSLSVLYMFISSHLLVSIIATPNLTTNDFIHVTQWCSILPMSYLMQSMFSTLLAIRDVFLISLMVLSTWYMVALLCRHRKQTRHLQGTSLSPKASPEQRATRSILMLMSLFVLMSVFDSIVCSSRTMYLNDPISYSYQLFMVHIYATVSPFVFIVTEKHIVNSLRSMCVKVMNV</sequence>
<name>VR105_RAT</name>
<feature type="chain" id="PRO_0000239956" description="Vomeronasal type-1 receptor 105">
    <location>
        <begin position="1"/>
        <end position="311"/>
    </location>
</feature>
<feature type="topological domain" description="Extracellular" evidence="2">
    <location>
        <begin position="1"/>
        <end position="17"/>
    </location>
</feature>
<feature type="transmembrane region" description="Helical; Name=1" evidence="2">
    <location>
        <begin position="18"/>
        <end position="38"/>
    </location>
</feature>
<feature type="topological domain" description="Cytoplasmic" evidence="2">
    <location>
        <begin position="39"/>
        <end position="50"/>
    </location>
</feature>
<feature type="transmembrane region" description="Helical; Name=2" evidence="2">
    <location>
        <begin position="51"/>
        <end position="71"/>
    </location>
</feature>
<feature type="topological domain" description="Extracellular" evidence="2">
    <location>
        <begin position="72"/>
        <end position="94"/>
    </location>
</feature>
<feature type="transmembrane region" description="Helical; Name=3" evidence="2">
    <location>
        <begin position="95"/>
        <end position="115"/>
    </location>
</feature>
<feature type="topological domain" description="Cytoplasmic" evidence="2">
    <location>
        <begin position="116"/>
        <end position="135"/>
    </location>
</feature>
<feature type="transmembrane region" description="Helical; Name=4" evidence="2">
    <location>
        <begin position="136"/>
        <end position="156"/>
    </location>
</feature>
<feature type="topological domain" description="Extracellular" evidence="2">
    <location>
        <begin position="157"/>
        <end position="188"/>
    </location>
</feature>
<feature type="transmembrane region" description="Helical; Name=5" evidence="2">
    <location>
        <begin position="189"/>
        <end position="209"/>
    </location>
</feature>
<feature type="topological domain" description="Cytoplasmic" evidence="2">
    <location>
        <begin position="210"/>
        <end position="239"/>
    </location>
</feature>
<feature type="transmembrane region" description="Helical; Name=6" evidence="2">
    <location>
        <begin position="240"/>
        <end position="260"/>
    </location>
</feature>
<feature type="topological domain" description="Extracellular" evidence="2">
    <location>
        <begin position="261"/>
        <end position="271"/>
    </location>
</feature>
<feature type="transmembrane region" description="Helical; Name=7" evidence="2">
    <location>
        <begin position="272"/>
        <end position="292"/>
    </location>
</feature>
<feature type="topological domain" description="Cytoplasmic" evidence="2">
    <location>
        <begin position="293"/>
        <end position="311"/>
    </location>
</feature>
<feature type="glycosylation site" description="N-linked (GlcNAc...) asparagine" evidence="2">
    <location>
        <position position="160"/>
    </location>
</feature>
<feature type="disulfide bond" evidence="3">
    <location>
        <begin position="86"/>
        <end position="173"/>
    </location>
</feature>
<evidence type="ECO:0000250" key="1">
    <source>
        <dbReference type="UniProtKB" id="Q8VIC6"/>
    </source>
</evidence>
<evidence type="ECO:0000255" key="2"/>
<evidence type="ECO:0000255" key="3">
    <source>
        <dbReference type="PROSITE-ProRule" id="PRU00521"/>
    </source>
</evidence>
<evidence type="ECO:0000269" key="4">
    <source>
    </source>
</evidence>
<evidence type="ECO:0000305" key="5"/>
<evidence type="ECO:0000312" key="6">
    <source>
        <dbReference type="EMBL" id="AAA92007.1"/>
    </source>
</evidence>
<organism>
    <name type="scientific">Rattus norvegicus</name>
    <name type="common">Rat</name>
    <dbReference type="NCBI Taxonomy" id="10116"/>
    <lineage>
        <taxon>Eukaryota</taxon>
        <taxon>Metazoa</taxon>
        <taxon>Chordata</taxon>
        <taxon>Craniata</taxon>
        <taxon>Vertebrata</taxon>
        <taxon>Euteleostomi</taxon>
        <taxon>Mammalia</taxon>
        <taxon>Eutheria</taxon>
        <taxon>Euarchontoglires</taxon>
        <taxon>Glires</taxon>
        <taxon>Rodentia</taxon>
        <taxon>Myomorpha</taxon>
        <taxon>Muroidea</taxon>
        <taxon>Muridae</taxon>
        <taxon>Murinae</taxon>
        <taxon>Rattus</taxon>
    </lineage>
</organism>
<dbReference type="EMBL" id="U36785">
    <property type="protein sequence ID" value="AAA92007.1"/>
    <property type="status" value="ALT_FRAME"/>
    <property type="molecule type" value="mRNA"/>
</dbReference>
<dbReference type="RefSeq" id="NP_775136.1">
    <property type="nucleotide sequence ID" value="NM_173113.1"/>
</dbReference>
<dbReference type="SMR" id="Q62850"/>
<dbReference type="GlyCosmos" id="Q62850">
    <property type="glycosylation" value="1 site, No reported glycans"/>
</dbReference>
<dbReference type="GlyGen" id="Q62850">
    <property type="glycosylation" value="1 site"/>
</dbReference>
<dbReference type="PaxDb" id="10116-ENSRNOP00000039516"/>
<dbReference type="GeneID" id="100312735"/>
<dbReference type="KEGG" id="rno:100312735"/>
<dbReference type="UCSC" id="RGD:708382">
    <property type="organism name" value="rat"/>
</dbReference>
<dbReference type="AGR" id="RGD:2316408"/>
<dbReference type="AGR" id="RGD:708382"/>
<dbReference type="CTD" id="100312735"/>
<dbReference type="RGD" id="708382">
    <property type="gene designation" value="Vom1r105"/>
</dbReference>
<dbReference type="eggNOG" id="ENOG502SNRJ">
    <property type="taxonomic scope" value="Eukaryota"/>
</dbReference>
<dbReference type="InParanoid" id="Q62850"/>
<dbReference type="PRO" id="PR:Q62850"/>
<dbReference type="Proteomes" id="UP000002494">
    <property type="component" value="Unplaced"/>
</dbReference>
<dbReference type="GO" id="GO:0005886">
    <property type="term" value="C:plasma membrane"/>
    <property type="evidence" value="ECO:0007669"/>
    <property type="project" value="UniProtKB-SubCell"/>
</dbReference>
<dbReference type="GO" id="GO:0016503">
    <property type="term" value="F:pheromone receptor activity"/>
    <property type="evidence" value="ECO:0007669"/>
    <property type="project" value="InterPro"/>
</dbReference>
<dbReference type="GO" id="GO:0019236">
    <property type="term" value="P:response to pheromone"/>
    <property type="evidence" value="ECO:0007669"/>
    <property type="project" value="UniProtKB-KW"/>
</dbReference>
<dbReference type="GO" id="GO:0007606">
    <property type="term" value="P:sensory perception of chemical stimulus"/>
    <property type="evidence" value="ECO:0007669"/>
    <property type="project" value="UniProtKB-ARBA"/>
</dbReference>
<dbReference type="CDD" id="cd13949">
    <property type="entry name" value="7tm_V1R_pheromone"/>
    <property type="match status" value="1"/>
</dbReference>
<dbReference type="FunFam" id="1.20.1070.10:FF:000051">
    <property type="entry name" value="Vomeronasal type-1 receptor"/>
    <property type="match status" value="1"/>
</dbReference>
<dbReference type="Gene3D" id="1.20.1070.10">
    <property type="entry name" value="Rhodopsin 7-helix transmembrane proteins"/>
    <property type="match status" value="1"/>
</dbReference>
<dbReference type="InterPro" id="IPR017452">
    <property type="entry name" value="GPCR_Rhodpsn_7TM"/>
</dbReference>
<dbReference type="InterPro" id="IPR004072">
    <property type="entry name" value="Vmron_rcpt_1"/>
</dbReference>
<dbReference type="PANTHER" id="PTHR24062">
    <property type="entry name" value="VOMERONASAL TYPE-1 RECEPTOR"/>
    <property type="match status" value="1"/>
</dbReference>
<dbReference type="Pfam" id="PF03402">
    <property type="entry name" value="V1R"/>
    <property type="match status" value="1"/>
</dbReference>
<dbReference type="PRINTS" id="PR01534">
    <property type="entry name" value="VOMERONASL1R"/>
</dbReference>
<dbReference type="SUPFAM" id="SSF81321">
    <property type="entry name" value="Family A G protein-coupled receptor-like"/>
    <property type="match status" value="1"/>
</dbReference>
<dbReference type="PROSITE" id="PS50262">
    <property type="entry name" value="G_PROTEIN_RECEP_F1_2"/>
    <property type="match status" value="1"/>
</dbReference>
<proteinExistence type="evidence at transcript level"/>
<gene>
    <name type="primary">Vom1r105</name>
    <name type="synonym">Vmn1r51</name>
    <name type="synonym">Vnr1</name>
</gene>
<comment type="function">
    <text evidence="1 4">Putative pheromone receptor implicated in the regulation of social as well as reproductive behavior.</text>
</comment>
<comment type="subcellular location">
    <subcellularLocation>
        <location evidence="5">Cell membrane</location>
        <topology evidence="2">Multi-pass membrane protein</topology>
    </subcellularLocation>
</comment>
<comment type="tissue specificity">
    <text evidence="4">Expressed in 1-4% of neurons of the vomeronasal organ. Only one pheromone receptor gene may be expressed in a particular neuron. Not expressed in the main olfactory epithelium.</text>
</comment>
<comment type="similarity">
    <text evidence="3">Belongs to the G-protein coupled receptor 1 family.</text>
</comment>
<comment type="sequence caution" evidence="5">
    <conflict type="frameshift">
        <sequence resource="EMBL-CDS" id="AAA92007"/>
    </conflict>
</comment>
<keyword id="KW-1003">Cell membrane</keyword>
<keyword id="KW-1015">Disulfide bond</keyword>
<keyword id="KW-0297">G-protein coupled receptor</keyword>
<keyword id="KW-0325">Glycoprotein</keyword>
<keyword id="KW-0472">Membrane</keyword>
<keyword id="KW-0589">Pheromone response</keyword>
<keyword id="KW-0675">Receptor</keyword>
<keyword id="KW-1185">Reference proteome</keyword>
<keyword id="KW-0807">Transducer</keyword>
<keyword id="KW-0812">Transmembrane</keyword>
<keyword id="KW-1133">Transmembrane helix</keyword>
<reference evidence="5 6" key="1">
    <citation type="journal article" date="1995" name="Cell">
        <title>A novel family of genes encoding putative pheromone receptors in mammals.</title>
        <authorList>
            <person name="Dulac C."/>
            <person name="Axel R."/>
        </authorList>
    </citation>
    <scope>NUCLEOTIDE SEQUENCE [MRNA]</scope>
    <scope>PUTATIVE FUNCTION</scope>
    <scope>TISSUE SPECIFICITY</scope>
    <source>
        <strain evidence="6">Sprague-Dawley</strain>
        <tissue evidence="6">Vomeronasal organ</tissue>
    </source>
</reference>
<accession>Q62850</accession>